<reference key="1">
    <citation type="submission" date="2007-05" db="EMBL/GenBank/DDBJ databases">
        <title>Complete sequence of chromosome of Staphylococcus aureus subsp. aureus JH9.</title>
        <authorList>
            <consortium name="US DOE Joint Genome Institute"/>
            <person name="Copeland A."/>
            <person name="Lucas S."/>
            <person name="Lapidus A."/>
            <person name="Barry K."/>
            <person name="Detter J.C."/>
            <person name="Glavina del Rio T."/>
            <person name="Hammon N."/>
            <person name="Israni S."/>
            <person name="Pitluck S."/>
            <person name="Chain P."/>
            <person name="Malfatti S."/>
            <person name="Shin M."/>
            <person name="Vergez L."/>
            <person name="Schmutz J."/>
            <person name="Larimer F."/>
            <person name="Land M."/>
            <person name="Hauser L."/>
            <person name="Kyrpides N."/>
            <person name="Kim E."/>
            <person name="Tomasz A."/>
            <person name="Richardson P."/>
        </authorList>
    </citation>
    <scope>NUCLEOTIDE SEQUENCE [LARGE SCALE GENOMIC DNA]</scope>
    <source>
        <strain>JH9</strain>
    </source>
</reference>
<comment type="function">
    <text evidence="1">Transfers a GMP moiety from GTP to Mo-molybdopterin (Mo-MPT) cofactor (Moco or molybdenum cofactor) to form Mo-molybdopterin guanine dinucleotide (Mo-MGD) cofactor.</text>
</comment>
<comment type="catalytic activity">
    <reaction evidence="1">
        <text>Mo-molybdopterin + GTP + H(+) = Mo-molybdopterin guanine dinucleotide + diphosphate</text>
        <dbReference type="Rhea" id="RHEA:34243"/>
        <dbReference type="ChEBI" id="CHEBI:15378"/>
        <dbReference type="ChEBI" id="CHEBI:33019"/>
        <dbReference type="ChEBI" id="CHEBI:37565"/>
        <dbReference type="ChEBI" id="CHEBI:71302"/>
        <dbReference type="ChEBI" id="CHEBI:71310"/>
        <dbReference type="EC" id="2.7.7.77"/>
    </reaction>
</comment>
<comment type="cofactor">
    <cofactor evidence="1">
        <name>Mg(2+)</name>
        <dbReference type="ChEBI" id="CHEBI:18420"/>
    </cofactor>
</comment>
<comment type="subcellular location">
    <subcellularLocation>
        <location evidence="1">Cytoplasm</location>
    </subcellularLocation>
</comment>
<comment type="domain">
    <text evidence="1">The N-terminal domain determines nucleotide recognition and specific binding, while the C-terminal domain determines the specific binding to the target protein.</text>
</comment>
<comment type="similarity">
    <text evidence="1">Belongs to the MobA family.</text>
</comment>
<feature type="chain" id="PRO_1000079117" description="Probable molybdenum cofactor guanylyltransferase">
    <location>
        <begin position="1"/>
        <end position="199"/>
    </location>
</feature>
<feature type="binding site" evidence="1">
    <location>
        <begin position="6"/>
        <end position="8"/>
    </location>
    <ligand>
        <name>GTP</name>
        <dbReference type="ChEBI" id="CHEBI:37565"/>
    </ligand>
</feature>
<feature type="binding site" evidence="1">
    <location>
        <position position="18"/>
    </location>
    <ligand>
        <name>GTP</name>
        <dbReference type="ChEBI" id="CHEBI:37565"/>
    </ligand>
</feature>
<feature type="binding site" evidence="1">
    <location>
        <position position="65"/>
    </location>
    <ligand>
        <name>GTP</name>
        <dbReference type="ChEBI" id="CHEBI:37565"/>
    </ligand>
</feature>
<feature type="binding site" evidence="1">
    <location>
        <position position="97"/>
    </location>
    <ligand>
        <name>GTP</name>
        <dbReference type="ChEBI" id="CHEBI:37565"/>
    </ligand>
</feature>
<feature type="binding site" evidence="1">
    <location>
        <position position="97"/>
    </location>
    <ligand>
        <name>Mg(2+)</name>
        <dbReference type="ChEBI" id="CHEBI:18420"/>
    </ligand>
</feature>
<name>MOBA_STAA9</name>
<gene>
    <name evidence="1" type="primary">mobA</name>
    <name type="ordered locus">SaurJH9_2294</name>
</gene>
<dbReference type="EC" id="2.7.7.77" evidence="1"/>
<dbReference type="EMBL" id="CP000703">
    <property type="protein sequence ID" value="ABQ50074.1"/>
    <property type="molecule type" value="Genomic_DNA"/>
</dbReference>
<dbReference type="RefSeq" id="WP_000643986.1">
    <property type="nucleotide sequence ID" value="NC_009487.1"/>
</dbReference>
<dbReference type="SMR" id="A5IV51"/>
<dbReference type="KEGG" id="saj:SaurJH9_2294"/>
<dbReference type="HOGENOM" id="CLU_055597_2_0_9"/>
<dbReference type="GO" id="GO:0005737">
    <property type="term" value="C:cytoplasm"/>
    <property type="evidence" value="ECO:0007669"/>
    <property type="project" value="UniProtKB-SubCell"/>
</dbReference>
<dbReference type="GO" id="GO:0005525">
    <property type="term" value="F:GTP binding"/>
    <property type="evidence" value="ECO:0007669"/>
    <property type="project" value="UniProtKB-UniRule"/>
</dbReference>
<dbReference type="GO" id="GO:0046872">
    <property type="term" value="F:metal ion binding"/>
    <property type="evidence" value="ECO:0007669"/>
    <property type="project" value="UniProtKB-KW"/>
</dbReference>
<dbReference type="GO" id="GO:0061603">
    <property type="term" value="F:molybdenum cofactor guanylyltransferase activity"/>
    <property type="evidence" value="ECO:0007669"/>
    <property type="project" value="UniProtKB-EC"/>
</dbReference>
<dbReference type="GO" id="GO:0006777">
    <property type="term" value="P:Mo-molybdopterin cofactor biosynthetic process"/>
    <property type="evidence" value="ECO:0007669"/>
    <property type="project" value="UniProtKB-KW"/>
</dbReference>
<dbReference type="CDD" id="cd02503">
    <property type="entry name" value="MobA"/>
    <property type="match status" value="1"/>
</dbReference>
<dbReference type="Gene3D" id="3.90.550.10">
    <property type="entry name" value="Spore Coat Polysaccharide Biosynthesis Protein SpsA, Chain A"/>
    <property type="match status" value="1"/>
</dbReference>
<dbReference type="HAMAP" id="MF_00316">
    <property type="entry name" value="MobA"/>
    <property type="match status" value="1"/>
</dbReference>
<dbReference type="InterPro" id="IPR025877">
    <property type="entry name" value="MobA-like_NTP_Trfase"/>
</dbReference>
<dbReference type="InterPro" id="IPR013482">
    <property type="entry name" value="Molybde_CF_guanTrfase"/>
</dbReference>
<dbReference type="InterPro" id="IPR029044">
    <property type="entry name" value="Nucleotide-diphossugar_trans"/>
</dbReference>
<dbReference type="NCBIfam" id="NF001457">
    <property type="entry name" value="PRK00317.1-3"/>
    <property type="match status" value="1"/>
</dbReference>
<dbReference type="PANTHER" id="PTHR19136">
    <property type="entry name" value="MOLYBDENUM COFACTOR GUANYLYLTRANSFERASE"/>
    <property type="match status" value="1"/>
</dbReference>
<dbReference type="PANTHER" id="PTHR19136:SF81">
    <property type="entry name" value="MOLYBDENUM COFACTOR GUANYLYLTRANSFERASE"/>
    <property type="match status" value="1"/>
</dbReference>
<dbReference type="Pfam" id="PF12804">
    <property type="entry name" value="NTP_transf_3"/>
    <property type="match status" value="1"/>
</dbReference>
<dbReference type="SUPFAM" id="SSF53448">
    <property type="entry name" value="Nucleotide-diphospho-sugar transferases"/>
    <property type="match status" value="1"/>
</dbReference>
<organism>
    <name type="scientific">Staphylococcus aureus (strain JH9)</name>
    <dbReference type="NCBI Taxonomy" id="359786"/>
    <lineage>
        <taxon>Bacteria</taxon>
        <taxon>Bacillati</taxon>
        <taxon>Bacillota</taxon>
        <taxon>Bacilli</taxon>
        <taxon>Bacillales</taxon>
        <taxon>Staphylococcaceae</taxon>
        <taxon>Staphylococcus</taxon>
    </lineage>
</organism>
<protein>
    <recommendedName>
        <fullName evidence="1">Probable molybdenum cofactor guanylyltransferase</fullName>
        <shortName evidence="1">MoCo guanylyltransferase</shortName>
        <ecNumber evidence="1">2.7.7.77</ecNumber>
    </recommendedName>
    <alternativeName>
        <fullName evidence="1">GTP:molybdopterin guanylyltransferase</fullName>
    </alternativeName>
    <alternativeName>
        <fullName evidence="1">Mo-MPT guanylyltransferase</fullName>
    </alternativeName>
    <alternativeName>
        <fullName evidence="1">Molybdopterin guanylyltransferase</fullName>
    </alternativeName>
    <alternativeName>
        <fullName evidence="1">Molybdopterin-guanine dinucleotide synthase</fullName>
        <shortName evidence="1">MGD synthase</shortName>
    </alternativeName>
</protein>
<sequence length="199" mass="22556">MKAIILAGGHSVRFGKPKAFAEVNGETFYSRVIKTLESTNMFNEIIISTNAQLATQFKYPNVVIDDENHNDKGPLAGIYTIMKQHPEEELFFVVSVDTPMITGKAVSTLYQFLVSHLIENHLDVAAFKEDGRFIPTIAFYSPNALGAITKALHSDNYSFKNIYHELSTDYLDVRDVDAPSYWYKNINYQHDLDALIQKL</sequence>
<proteinExistence type="inferred from homology"/>
<evidence type="ECO:0000255" key="1">
    <source>
        <dbReference type="HAMAP-Rule" id="MF_00316"/>
    </source>
</evidence>
<keyword id="KW-0963">Cytoplasm</keyword>
<keyword id="KW-0342">GTP-binding</keyword>
<keyword id="KW-0460">Magnesium</keyword>
<keyword id="KW-0479">Metal-binding</keyword>
<keyword id="KW-0501">Molybdenum cofactor biosynthesis</keyword>
<keyword id="KW-0547">Nucleotide-binding</keyword>
<keyword id="KW-0808">Transferase</keyword>
<accession>A5IV51</accession>